<proteinExistence type="inferred from homology"/>
<feature type="chain" id="PRO_1000081442" description="Small ribosomal subunit protein bS20">
    <location>
        <begin position="1"/>
        <end position="91"/>
    </location>
</feature>
<feature type="region of interest" description="Disordered" evidence="2">
    <location>
        <begin position="1"/>
        <end position="25"/>
    </location>
</feature>
<feature type="compositionally biased region" description="Basic and acidic residues" evidence="2">
    <location>
        <begin position="1"/>
        <end position="18"/>
    </location>
</feature>
<name>RS20_CHLPM</name>
<keyword id="KW-0687">Ribonucleoprotein</keyword>
<keyword id="KW-0689">Ribosomal protein</keyword>
<keyword id="KW-0694">RNA-binding</keyword>
<keyword id="KW-0699">rRNA-binding</keyword>
<comment type="function">
    <text evidence="1">Binds directly to 16S ribosomal RNA.</text>
</comment>
<comment type="similarity">
    <text evidence="1">Belongs to the bacterial ribosomal protein bS20 family.</text>
</comment>
<sequence length="91" mass="10464">MPLHKSAEKRLRQSDRKNARNRARKKELKVLVKNMQKLVDAGAPKPEVEVAYRSAVQKLDRLGVKNYIHANKASRKKSQLARILNEYGKAE</sequence>
<reference key="1">
    <citation type="submission" date="2007-03" db="EMBL/GenBank/DDBJ databases">
        <title>Complete sequence of Prosthecochloris vibrioformis DSM 265.</title>
        <authorList>
            <consortium name="US DOE Joint Genome Institute"/>
            <person name="Copeland A."/>
            <person name="Lucas S."/>
            <person name="Lapidus A."/>
            <person name="Barry K."/>
            <person name="Detter J.C."/>
            <person name="Glavina del Rio T."/>
            <person name="Hammon N."/>
            <person name="Israni S."/>
            <person name="Pitluck S."/>
            <person name="Schmutz J."/>
            <person name="Larimer F."/>
            <person name="Land M."/>
            <person name="Hauser L."/>
            <person name="Mikhailova N."/>
            <person name="Li T."/>
            <person name="Overmann J."/>
            <person name="Schuster S.C."/>
            <person name="Bryant D.A."/>
            <person name="Richardson P."/>
        </authorList>
    </citation>
    <scope>NUCLEOTIDE SEQUENCE [LARGE SCALE GENOMIC DNA]</scope>
    <source>
        <strain>DSM 265 / 1930</strain>
    </source>
</reference>
<dbReference type="EMBL" id="CP000607">
    <property type="protein sequence ID" value="ABP37551.1"/>
    <property type="molecule type" value="Genomic_DNA"/>
</dbReference>
<dbReference type="SMR" id="A4SGE2"/>
<dbReference type="STRING" id="290318.Cvib_1540"/>
<dbReference type="KEGG" id="pvi:Cvib_1540"/>
<dbReference type="eggNOG" id="COG0268">
    <property type="taxonomic scope" value="Bacteria"/>
</dbReference>
<dbReference type="HOGENOM" id="CLU_160655_3_1_10"/>
<dbReference type="OrthoDB" id="9808392at2"/>
<dbReference type="GO" id="GO:0005829">
    <property type="term" value="C:cytosol"/>
    <property type="evidence" value="ECO:0007669"/>
    <property type="project" value="TreeGrafter"/>
</dbReference>
<dbReference type="GO" id="GO:0015935">
    <property type="term" value="C:small ribosomal subunit"/>
    <property type="evidence" value="ECO:0007669"/>
    <property type="project" value="TreeGrafter"/>
</dbReference>
<dbReference type="GO" id="GO:0070181">
    <property type="term" value="F:small ribosomal subunit rRNA binding"/>
    <property type="evidence" value="ECO:0007669"/>
    <property type="project" value="TreeGrafter"/>
</dbReference>
<dbReference type="GO" id="GO:0003735">
    <property type="term" value="F:structural constituent of ribosome"/>
    <property type="evidence" value="ECO:0007669"/>
    <property type="project" value="InterPro"/>
</dbReference>
<dbReference type="GO" id="GO:0006412">
    <property type="term" value="P:translation"/>
    <property type="evidence" value="ECO:0007669"/>
    <property type="project" value="UniProtKB-UniRule"/>
</dbReference>
<dbReference type="Gene3D" id="1.20.58.110">
    <property type="entry name" value="Ribosomal protein S20"/>
    <property type="match status" value="1"/>
</dbReference>
<dbReference type="HAMAP" id="MF_00500">
    <property type="entry name" value="Ribosomal_bS20"/>
    <property type="match status" value="1"/>
</dbReference>
<dbReference type="InterPro" id="IPR002583">
    <property type="entry name" value="Ribosomal_bS20"/>
</dbReference>
<dbReference type="InterPro" id="IPR036510">
    <property type="entry name" value="Ribosomal_bS20_sf"/>
</dbReference>
<dbReference type="NCBIfam" id="TIGR00029">
    <property type="entry name" value="S20"/>
    <property type="match status" value="1"/>
</dbReference>
<dbReference type="PANTHER" id="PTHR33398">
    <property type="entry name" value="30S RIBOSOMAL PROTEIN S20"/>
    <property type="match status" value="1"/>
</dbReference>
<dbReference type="PANTHER" id="PTHR33398:SF1">
    <property type="entry name" value="SMALL RIBOSOMAL SUBUNIT PROTEIN BS20C"/>
    <property type="match status" value="1"/>
</dbReference>
<dbReference type="Pfam" id="PF01649">
    <property type="entry name" value="Ribosomal_S20p"/>
    <property type="match status" value="1"/>
</dbReference>
<dbReference type="SUPFAM" id="SSF46992">
    <property type="entry name" value="Ribosomal protein S20"/>
    <property type="match status" value="1"/>
</dbReference>
<protein>
    <recommendedName>
        <fullName evidence="1">Small ribosomal subunit protein bS20</fullName>
    </recommendedName>
    <alternativeName>
        <fullName evidence="3">30S ribosomal protein S20</fullName>
    </alternativeName>
</protein>
<organism>
    <name type="scientific">Chlorobium phaeovibrioides (strain DSM 265 / 1930)</name>
    <name type="common">Prosthecochloris vibrioformis (strain DSM 265)</name>
    <dbReference type="NCBI Taxonomy" id="290318"/>
    <lineage>
        <taxon>Bacteria</taxon>
        <taxon>Pseudomonadati</taxon>
        <taxon>Chlorobiota</taxon>
        <taxon>Chlorobiia</taxon>
        <taxon>Chlorobiales</taxon>
        <taxon>Chlorobiaceae</taxon>
        <taxon>Chlorobium/Pelodictyon group</taxon>
        <taxon>Chlorobium</taxon>
    </lineage>
</organism>
<gene>
    <name evidence="1" type="primary">rpsT</name>
    <name type="ordered locus">Cvib_1540</name>
</gene>
<evidence type="ECO:0000255" key="1">
    <source>
        <dbReference type="HAMAP-Rule" id="MF_00500"/>
    </source>
</evidence>
<evidence type="ECO:0000256" key="2">
    <source>
        <dbReference type="SAM" id="MobiDB-lite"/>
    </source>
</evidence>
<evidence type="ECO:0000305" key="3"/>
<accession>A4SGE2</accession>